<gene>
    <name evidence="7" type="primary">UGT76G1</name>
</gene>
<name>U76G1_STERE</name>
<proteinExistence type="evidence at protein level"/>
<feature type="chain" id="PRO_0000434465" description="UDP-glycosyltransferase 76G1">
    <location>
        <begin position="1"/>
        <end position="458"/>
    </location>
</feature>
<feature type="active site" description="Proton acceptor" evidence="5 6">
    <location>
        <position position="25"/>
    </location>
</feature>
<feature type="active site" description="Charge relay" evidence="5 6">
    <location>
        <position position="124"/>
    </location>
</feature>
<feature type="binding site" evidence="6 11">
    <location>
        <position position="25"/>
    </location>
    <ligand>
        <name>rebaudioside A</name>
        <dbReference type="ChEBI" id="CHEBI:145012"/>
    </ligand>
</feature>
<feature type="binding site" evidence="6 10">
    <location>
        <position position="25"/>
    </location>
    <ligand>
        <name>rubusoside</name>
        <dbReference type="ChEBI" id="CHEBI:145021"/>
    </ligand>
</feature>
<feature type="binding site" evidence="5 6 9 13">
    <location>
        <position position="27"/>
    </location>
    <ligand>
        <name>UDP</name>
        <dbReference type="ChEBI" id="CHEBI:58223"/>
    </ligand>
</feature>
<feature type="binding site" evidence="5 6 11 14">
    <location>
        <begin position="146"/>
        <end position="147"/>
    </location>
    <ligand>
        <name>rebaudioside A</name>
        <dbReference type="ChEBI" id="CHEBI:145012"/>
    </ligand>
</feature>
<feature type="binding site" evidence="5 6 11 14">
    <location>
        <position position="155"/>
    </location>
    <ligand>
        <name>rebaudioside A</name>
        <dbReference type="ChEBI" id="CHEBI:145012"/>
    </ligand>
</feature>
<feature type="binding site" evidence="5 6 9 13">
    <location>
        <position position="283"/>
    </location>
    <ligand>
        <name>UDP</name>
        <dbReference type="ChEBI" id="CHEBI:58223"/>
    </ligand>
</feature>
<feature type="binding site" evidence="5 6 9 13">
    <location>
        <begin position="338"/>
        <end position="339"/>
    </location>
    <ligand>
        <name>UDP</name>
        <dbReference type="ChEBI" id="CHEBI:58223"/>
    </ligand>
</feature>
<feature type="binding site" evidence="5 6 9 13">
    <location>
        <begin position="356"/>
        <end position="364"/>
    </location>
    <ligand>
        <name>UDP</name>
        <dbReference type="ChEBI" id="CHEBI:58223"/>
    </ligand>
</feature>
<feature type="binding site" evidence="5 6 11 14">
    <location>
        <position position="359"/>
    </location>
    <ligand>
        <name>rebaudioside A</name>
        <dbReference type="ChEBI" id="CHEBI:145012"/>
    </ligand>
</feature>
<feature type="binding site" evidence="5 6 11 12 14">
    <location>
        <begin position="380"/>
        <end position="381"/>
    </location>
    <ligand>
        <name>rebaudioside A</name>
        <dbReference type="ChEBI" id="CHEBI:145012"/>
    </ligand>
</feature>
<feature type="mutagenesis site" description="Abolishes catalytic activity." evidence="5 6">
    <original>H</original>
    <variation>A</variation>
    <variation>N</variation>
    <location>
        <position position="25"/>
    </location>
</feature>
<feature type="mutagenesis site" description="Reduces catalytic efficiency 780-fold for stevioside." evidence="5">
    <original>L</original>
    <variation>I</variation>
    <location>
        <position position="126"/>
    </location>
</feature>
<feature type="mutagenesis site" description="Reduces catalytic efficiency 19-fold for stevioside." evidence="5">
    <original>M</original>
    <variation>F</variation>
    <location>
        <position position="145"/>
    </location>
</feature>
<feature type="mutagenesis site" description="Reduces catalytic efficiency 780-fold for stevioside." evidence="5">
    <original>M</original>
    <variation>W</variation>
    <location>
        <position position="145"/>
    </location>
</feature>
<feature type="mutagenesis site" description="Reduces catalytic efficiency 78-fold for stevioside." evidence="5">
    <original>T</original>
    <variation>A</variation>
    <location>
        <position position="146"/>
    </location>
</feature>
<feature type="mutagenesis site" description="Reduces catalytic efficiency 173-fold for stevioside." evidence="5">
    <original>S</original>
    <variation>A</variation>
    <location>
        <position position="147"/>
    </location>
</feature>
<feature type="mutagenesis site" description="Reduces catalytic efficiency 142-fold for stevioside." evidence="5">
    <original>S</original>
    <variation>N</variation>
    <location>
        <position position="147"/>
    </location>
</feature>
<feature type="mutagenesis site" description="Reduces catalytic efficiency 142-fold for stevioside." evidence="5">
    <original>S</original>
    <variation>T</variation>
    <location>
        <position position="147"/>
    </location>
</feature>
<feature type="mutagenesis site" description="Reduces catalytic efficiency 16-fold for stevioside." evidence="5">
    <original>N</original>
    <variation>A</variation>
    <location>
        <position position="151"/>
    </location>
</feature>
<feature type="mutagenesis site" description="Reduces catalytic efficiency 4-fold for stevioside." evidence="5">
    <original>N</original>
    <variation>Q</variation>
    <location>
        <position position="151"/>
    </location>
</feature>
<feature type="mutagenesis site" description="Reduces catalytic efficiency 3.5-fold for stevioside." evidence="5">
    <original>H</original>
    <variation>A</variation>
    <location>
        <position position="155"/>
    </location>
</feature>
<feature type="mutagenesis site" description="Reduces catalytic efficiency 29-fold for stevioside." evidence="5">
    <original>H</original>
    <variation>R</variation>
    <location>
        <position position="155"/>
    </location>
</feature>
<feature type="mutagenesis site" description="Reduces catalytic efficiency 25-fold for stevioside." evidence="5">
    <original>H</original>
    <variation>W</variation>
    <location>
        <position position="155"/>
    </location>
</feature>
<feature type="mutagenesis site" description="Reduces catalytic efficiency 4-fold for stevioside." evidence="5">
    <original>L</original>
    <variation>I</variation>
    <location>
        <position position="200"/>
    </location>
</feature>
<feature type="mutagenesis site" description="Reduces catalytic efficiency 2.6-fold for stevioside." evidence="5">
    <original>L</original>
    <variation>I</variation>
    <location>
        <position position="204"/>
    </location>
</feature>
<feature type="mutagenesis site" description="Reduces catalytic efficiency 3.6-fold for stevioside." evidence="5">
    <original>M</original>
    <variation>F</variation>
    <location>
        <position position="207"/>
    </location>
</feature>
<feature type="mutagenesis site" description="Reduces catalytic efficiency 13-fold for stevioside." evidence="5">
    <original>M</original>
    <variation>W</variation>
    <location>
        <position position="207"/>
    </location>
</feature>
<feature type="mutagenesis site" description="Reduces catalytic efficiency 2.5-fold for stevioside." evidence="5">
    <original>L</original>
    <variation>I</variation>
    <location>
        <position position="379"/>
    </location>
</feature>
<feature type="strand" evidence="15">
    <location>
        <begin position="13"/>
        <end position="18"/>
    </location>
</feature>
<feature type="helix" evidence="15">
    <location>
        <begin position="23"/>
        <end position="38"/>
    </location>
</feature>
<feature type="strand" evidence="15">
    <location>
        <begin position="42"/>
        <end position="47"/>
    </location>
</feature>
<feature type="helix" evidence="15">
    <location>
        <begin position="55"/>
        <end position="57"/>
    </location>
</feature>
<feature type="strand" evidence="15">
    <location>
        <begin position="61"/>
        <end position="65"/>
    </location>
</feature>
<feature type="turn" evidence="15">
    <location>
        <begin position="74"/>
        <end position="78"/>
    </location>
</feature>
<feature type="strand" evidence="15">
    <location>
        <begin position="81"/>
        <end position="84"/>
    </location>
</feature>
<feature type="helix" evidence="15">
    <location>
        <begin position="85"/>
        <end position="88"/>
    </location>
</feature>
<feature type="helix" evidence="15">
    <location>
        <begin position="89"/>
        <end position="96"/>
    </location>
</feature>
<feature type="helix" evidence="15">
    <location>
        <begin position="98"/>
        <end position="110"/>
    </location>
</feature>
<feature type="strand" evidence="15">
    <location>
        <begin position="117"/>
        <end position="124"/>
    </location>
</feature>
<feature type="helix" evidence="15">
    <location>
        <begin position="130"/>
        <end position="136"/>
    </location>
</feature>
<feature type="strand" evidence="15">
    <location>
        <begin position="141"/>
        <end position="145"/>
    </location>
</feature>
<feature type="helix" evidence="15">
    <location>
        <begin position="149"/>
        <end position="156"/>
    </location>
</feature>
<feature type="helix" evidence="15">
    <location>
        <begin position="158"/>
        <end position="163"/>
    </location>
</feature>
<feature type="turn" evidence="17">
    <location>
        <begin position="164"/>
        <end position="167"/>
    </location>
</feature>
<feature type="strand" evidence="18">
    <location>
        <begin position="169"/>
        <end position="171"/>
    </location>
</feature>
<feature type="strand" evidence="15">
    <location>
        <begin position="177"/>
        <end position="179"/>
    </location>
</feature>
<feature type="strand" evidence="15">
    <location>
        <begin position="182"/>
        <end position="186"/>
    </location>
</feature>
<feature type="helix" evidence="15">
    <location>
        <begin position="187"/>
        <end position="193"/>
    </location>
</feature>
<feature type="turn" evidence="15">
    <location>
        <begin position="194"/>
        <end position="196"/>
    </location>
</feature>
<feature type="helix" evidence="15">
    <location>
        <begin position="197"/>
        <end position="212"/>
    </location>
</feature>
<feature type="strand" evidence="15">
    <location>
        <begin position="217"/>
        <end position="221"/>
    </location>
</feature>
<feature type="turn" evidence="15">
    <location>
        <begin position="223"/>
        <end position="225"/>
    </location>
</feature>
<feature type="helix" evidence="15">
    <location>
        <begin position="227"/>
        <end position="229"/>
    </location>
</feature>
<feature type="helix" evidence="15">
    <location>
        <begin position="230"/>
        <end position="236"/>
    </location>
</feature>
<feature type="strand" evidence="15">
    <location>
        <begin position="241"/>
        <end position="243"/>
    </location>
</feature>
<feature type="helix" evidence="15">
    <location>
        <begin position="246"/>
        <end position="249"/>
    </location>
</feature>
<feature type="helix" evidence="15">
    <location>
        <begin position="253"/>
        <end position="255"/>
    </location>
</feature>
<feature type="helix" evidence="15">
    <location>
        <begin position="263"/>
        <end position="268"/>
    </location>
</feature>
<feature type="strand" evidence="15">
    <location>
        <begin position="276"/>
        <end position="280"/>
    </location>
</feature>
<feature type="turn" evidence="19">
    <location>
        <begin position="282"/>
        <end position="284"/>
    </location>
</feature>
<feature type="helix" evidence="15">
    <location>
        <begin position="289"/>
        <end position="302"/>
    </location>
</feature>
<feature type="strand" evidence="15">
    <location>
        <begin position="305"/>
        <end position="309"/>
    </location>
</feature>
<feature type="strand" evidence="18">
    <location>
        <begin position="314"/>
        <end position="317"/>
    </location>
</feature>
<feature type="strand" evidence="15">
    <location>
        <begin position="318"/>
        <end position="321"/>
    </location>
</feature>
<feature type="turn" evidence="16">
    <location>
        <begin position="326"/>
        <end position="332"/>
    </location>
</feature>
<feature type="strand" evidence="15">
    <location>
        <begin position="333"/>
        <end position="337"/>
    </location>
</feature>
<feature type="helix" evidence="15">
    <location>
        <begin position="341"/>
        <end position="345"/>
    </location>
</feature>
<feature type="strand" evidence="15">
    <location>
        <begin position="350"/>
        <end position="355"/>
    </location>
</feature>
<feature type="helix" evidence="15">
    <location>
        <begin position="359"/>
        <end position="368"/>
    </location>
</feature>
<feature type="strand" evidence="15">
    <location>
        <begin position="372"/>
        <end position="374"/>
    </location>
</feature>
<feature type="helix" evidence="15">
    <location>
        <begin position="381"/>
        <end position="390"/>
    </location>
</feature>
<feature type="strand" evidence="15">
    <location>
        <begin position="395"/>
        <end position="397"/>
    </location>
</feature>
<feature type="helix" evidence="15">
    <location>
        <begin position="404"/>
        <end position="415"/>
    </location>
</feature>
<feature type="helix" evidence="15">
    <location>
        <begin position="418"/>
        <end position="420"/>
    </location>
</feature>
<feature type="helix" evidence="15">
    <location>
        <begin position="421"/>
        <end position="438"/>
    </location>
</feature>
<feature type="helix" evidence="15">
    <location>
        <begin position="443"/>
        <end position="457"/>
    </location>
</feature>
<keyword id="KW-0002">3D-structure</keyword>
<keyword id="KW-0808">Transferase</keyword>
<sequence length="458" mass="52029">MENKTETTVRRRRRIILFPVPFQGHINPILQLANVLYSKGFSITIFHTNFNKPKTSNYPHFTFRFILDNDPQDERISNLPTHGPLAGMRIPIINEHGADELRRELELLMLASEEDEEVSCLITDALWYFAQSVADSLNLRRLVLMTSSLFNFHAHVSLPQFDELGYLDPDDKTRLEEQASGFPMLKVKDIKSAYSNWQILKEILGKMIKQTKASSGVIWNSFKELEESELETVIREIPAPSFLIPLPKHLTASSSSLLDHDRTVFQWLDQQPPSSVLYVSFGSTSEVDEKDFLEIARGLVDSKQSFLWVVRPGFVKGSTWVEPLPDGFLGERGRIVKWVPQQEVLAHGAIGAFWTHSGWNSTLESVCEGVPMIFSDFGLDQPLNARYMSDVLKVGVYLENGWERGEIANAIRRVMVDEEGEYIRQNARVLKQKADVSLMKGGSSYESLESLVSYISSL</sequence>
<reference key="1">
    <citation type="journal article" date="2005" name="Plant J.">
        <title>Functional genomics uncovers three glucosyltransferases involved in the synthesis of the major sweet glucosides of Stevia rebaudiana.</title>
        <authorList>
            <person name="Richman A."/>
            <person name="Swanson A."/>
            <person name="Humphrey T."/>
            <person name="Chapman R."/>
            <person name="McGarvey B."/>
            <person name="Pocs R."/>
            <person name="Brandle J."/>
        </authorList>
    </citation>
    <scope>NUCLEOTIDE SEQUENCE [MRNA]</scope>
    <scope>FUNCTION</scope>
    <scope>CATALYTIC ACTIVITY</scope>
    <scope>BIOPHYSICOCHEMICAL PROPERTIES</scope>
    <source>
        <tissue>Leaf</tissue>
    </source>
</reference>
<reference key="2">
    <citation type="journal article" date="2016" name="J. Biotechnol.">
        <title>Screening of recombinant glycosyltransferases reveals the broad acceptor specificity of stevia UGT-76G1.</title>
        <authorList>
            <person name="Dewitte G."/>
            <person name="Walmagh M."/>
            <person name="Diricks M."/>
            <person name="Lepak A."/>
            <person name="Gutmann A."/>
            <person name="Nidetzky B."/>
            <person name="Desmet T."/>
        </authorList>
    </citation>
    <scope>FUNCTION</scope>
    <scope>CATALYTIC ACTIVITY</scope>
    <scope>BIOPHYSICOCHEMICAL PROPERTIES</scope>
</reference>
<reference key="3">
    <citation type="journal article" date="2017" name="Phytochemistry">
        <title>Impact of blue, red, and far-red light treatments on gene expression and steviol glycoside accumulation in Stevia rebaudiana.</title>
        <authorList>
            <person name="Yoneda Y."/>
            <person name="Nakashima H."/>
            <person name="Miyasaka J."/>
            <person name="Ohdoi K."/>
            <person name="Shimizu H."/>
        </authorList>
    </citation>
    <scope>INDUCTION</scope>
</reference>
<reference key="4">
    <citation type="journal article" date="2019" name="Plant Biotechnol. J.">
        <title>Overexpression of SrUGT76G1 in Stevia alters major steviol glycosides composition towards improved quality.</title>
        <authorList>
            <person name="Kim M.J."/>
            <person name="Zheng J."/>
            <person name="Liao M.H."/>
            <person name="Jang I.C."/>
        </authorList>
    </citation>
    <scope>FUNCTION</scope>
    <scope>CATALYTIC ACTIVITY</scope>
    <scope>BIOTECHNOLOGY</scope>
</reference>
<reference key="5">
    <citation type="journal article" date="2019" name="Nat. Commun.">
        <title>Hydrophobic recognition allows the glycosyltransferase UGT76G1 to catalyze its substrate in two orientations.</title>
        <authorList>
            <person name="Yang T."/>
            <person name="Zhang J."/>
            <person name="Ke D."/>
            <person name="Yang W."/>
            <person name="Tang M."/>
            <person name="Jiang J."/>
            <person name="Cheng G."/>
            <person name="Li J."/>
            <person name="Cheng W."/>
            <person name="Wei Y."/>
            <person name="Li Q."/>
            <person name="Naismith J.H."/>
            <person name="Zhu X."/>
        </authorList>
    </citation>
    <scope>X-RAY CRYSTALLOGRAPHY (1.69 ANGSTROMS) IN COMPLEX WITH UDP-GLUCOSE; RUBUSOSIDE AND REBAUDIOSIDE A</scope>
    <scope>FUNCTION</scope>
    <scope>CATALYTIC ACTIVITY</scope>
    <scope>BIOPHYSICOCHEMICAL PROPERTIES</scope>
    <scope>ACTIVE SITE</scope>
    <scope>SUBUNIT</scope>
    <scope>MUTAGENESIS OF HIS-25</scope>
</reference>
<reference key="6">
    <citation type="journal article" date="2019" name="Proc. Natl. Acad. Sci. U.S.A.">
        <title>Molecular basis for branched steviol glucoside biosynthesis.</title>
        <authorList>
            <person name="Lee S.G."/>
            <person name="Salomon E."/>
            <person name="Yu O."/>
            <person name="Jez J.M."/>
        </authorList>
    </citation>
    <scope>X-RAY CRYSTALLOGRAPHY (1.75 ANGSTROMS) IN COMPLEX WITH UDP-GLUCOSE</scope>
    <scope>FUNCTION</scope>
    <scope>CATALYTIC ACTIVITY</scope>
    <scope>BIOPHYSICOCHEMICAL PROPERTIES</scope>
    <scope>ACTIVE SITE</scope>
    <scope>SUBUNIT</scope>
    <scope>MUTAGENESIS OF HIS-25; LEU-126; MET-145; THR-146; SER-147; ASN-151; HIS-155; LEU-200; LEU-204; MET-207 AND LEU-379</scope>
</reference>
<organism>
    <name type="scientific">Stevia rebaudiana</name>
    <name type="common">Stevia</name>
    <name type="synonym">Eupatorium rebaudianum</name>
    <dbReference type="NCBI Taxonomy" id="55670"/>
    <lineage>
        <taxon>Eukaryota</taxon>
        <taxon>Viridiplantae</taxon>
        <taxon>Streptophyta</taxon>
        <taxon>Embryophyta</taxon>
        <taxon>Tracheophyta</taxon>
        <taxon>Spermatophyta</taxon>
        <taxon>Magnoliopsida</taxon>
        <taxon>eudicotyledons</taxon>
        <taxon>Gunneridae</taxon>
        <taxon>Pentapetalae</taxon>
        <taxon>asterids</taxon>
        <taxon>campanulids</taxon>
        <taxon>Asterales</taxon>
        <taxon>Asteraceae</taxon>
        <taxon>Asteroideae</taxon>
        <taxon>Heliantheae alliance</taxon>
        <taxon>Eupatorieae</taxon>
        <taxon>Stevia</taxon>
    </lineage>
</organism>
<protein>
    <recommendedName>
        <fullName evidence="7">UDP-glycosyltransferase 76G1</fullName>
        <ecNumber evidence="1 5 6">2.4.1.-</ecNumber>
    </recommendedName>
</protein>
<comment type="function">
    <text evidence="1 2 4 5 6">Involved in the biosynthesis of steviol glycosides in leaves (PubMed:15610349, PubMed:30569490, PubMed:31182573, PubMed:31324778). Converts the di-glycoside steviolbioside to the tri-glycoside rebaudioside B (PubMed:15610349, PubMed:31324778). Converts the tri-glycoside stevioside to the tetra-glycoside rebaudioside A (PubMed:15610349, PubMed:27378621, PubMed:30569490, PubMed:31182573, PubMed:31324778). Converts the tetra-glycoside rebaudioside E to the penta-glycoside rebaudioside D (PubMed:31324778). Converts the penta-glycoside rebaudioside D to the hexa-glycoside rebaudioside M (PubMed:31324778). Can glucosylate rubusoside and rebaudioside A in vitro (PubMed:31324778).</text>
</comment>
<comment type="catalytic activity">
    <reaction evidence="1 6">
        <text>steviolbioside + UDP-alpha-D-glucose = rebaudioside B + UDP + H(+)</text>
        <dbReference type="Rhea" id="RHEA:61752"/>
        <dbReference type="ChEBI" id="CHEBI:15378"/>
        <dbReference type="ChEBI" id="CHEBI:58223"/>
        <dbReference type="ChEBI" id="CHEBI:58885"/>
        <dbReference type="ChEBI" id="CHEBI:145009"/>
        <dbReference type="ChEBI" id="CHEBI:145013"/>
    </reaction>
    <physiologicalReaction direction="left-to-right" evidence="1">
        <dbReference type="Rhea" id="RHEA:61753"/>
    </physiologicalReaction>
</comment>
<comment type="catalytic activity">
    <reaction evidence="1 2 4 5 6">
        <text>stevioside + UDP-alpha-D-glucose = rebaudioside A + UDP + H(+)</text>
        <dbReference type="Rhea" id="RHEA:61756"/>
        <dbReference type="ChEBI" id="CHEBI:9271"/>
        <dbReference type="ChEBI" id="CHEBI:15378"/>
        <dbReference type="ChEBI" id="CHEBI:58223"/>
        <dbReference type="ChEBI" id="CHEBI:58885"/>
        <dbReference type="ChEBI" id="CHEBI:145012"/>
    </reaction>
    <physiologicalReaction direction="left-to-right" evidence="1">
        <dbReference type="Rhea" id="RHEA:61757"/>
    </physiologicalReaction>
</comment>
<comment type="catalytic activity">
    <reaction evidence="6">
        <text>rebaudioside E + UDP-alpha-D-glucose = rebaudioside D + UDP + H(+)</text>
        <dbReference type="Rhea" id="RHEA:61772"/>
        <dbReference type="ChEBI" id="CHEBI:15378"/>
        <dbReference type="ChEBI" id="CHEBI:58223"/>
        <dbReference type="ChEBI" id="CHEBI:58885"/>
        <dbReference type="ChEBI" id="CHEBI:145018"/>
        <dbReference type="ChEBI" id="CHEBI:145022"/>
    </reaction>
    <physiologicalReaction direction="left-to-right" evidence="6">
        <dbReference type="Rhea" id="RHEA:61773"/>
    </physiologicalReaction>
</comment>
<comment type="catalytic activity">
    <reaction evidence="6">
        <text>rebaudioside D + UDP-alpha-D-glucose = rebaudioside M + UDP + H(+)</text>
        <dbReference type="Rhea" id="RHEA:61776"/>
        <dbReference type="ChEBI" id="CHEBI:15378"/>
        <dbReference type="ChEBI" id="CHEBI:58223"/>
        <dbReference type="ChEBI" id="CHEBI:58885"/>
        <dbReference type="ChEBI" id="CHEBI:145019"/>
        <dbReference type="ChEBI" id="CHEBI:145022"/>
    </reaction>
    <physiologicalReaction direction="left-to-right" evidence="6">
        <dbReference type="Rhea" id="RHEA:61777"/>
    </physiologicalReaction>
</comment>
<comment type="biophysicochemical properties">
    <kinetics>
        <KM evidence="6">5.6 uM for UDP-glucose</KM>
        <KM evidence="2">440 uM for UDP-glucose</KM>
        <KM evidence="6">4.5 uM for steviolbioside</KM>
        <KM evidence="1">103.2 uM for steviolbioside</KM>
        <KM evidence="6">25.5 uM for stevioside</KM>
        <KM evidence="2">230 uM for stevioside</KM>
        <KM evidence="1">291.7 uM for stevioside</KM>
        <KM evidence="5">360 uM for stevioside</KM>
        <KM evidence="6">9.2 uM for rebaudioside E</KM>
        <KM evidence="6">54.4 uM for rubusoside</KM>
        <KM evidence="6">94.2 uM for rebaudioside D</KM>
        <KM evidence="6">243.4 uM for rebaudioside A</KM>
        <Vmax evidence="2">11.1 umol/min/mg enzyme toward UDP-glucose</Vmax>
        <Vmax evidence="2">9.3 umol/min/mg enzyme toward stevioside</Vmax>
        <text evidence="5 6">kcat is 4.1 min(-1) with UDP-glucose as substrate (PubMed:31324778). kcat is 32.5 min(-1) with UDP-glucose as substrate (PubMed:31182573). kcat is 4.8 min(-1) with steviolbioside as substrate (PubMed:31324778). kcat is 21.3 min(-1) with stevioside as substrate (PubMed:31324778). kcat is 33.8 min(-1) with stevioside as substrate (PubMed:31182573). kcat is 41.8 min(-1) with rebaudioside E as substrate (PubMed:31324778). kcat is 5.9 min(-1) with rubusoside as substrate (PubMed:31324778). kcat is 3.3 min(-1) with rebaudioside D as substrate (PubMed:31324778). kcat is 0.12 min(-1) with rebaudioside A as substrate (PubMed:31324778).</text>
    </kinetics>
    <phDependence>
        <text evidence="2">Optimum pH is 7.0-8.5 with stevioside as substrate (at 40 degrees Celsius).</text>
    </phDependence>
    <temperatureDependence>
        <text evidence="2">Optimum temperature is 40 degrees Celsius with stevioside as substrate (at pH 7.0).</text>
    </temperatureDependence>
</comment>
<comment type="subunit">
    <text evidence="5 6">Monomer.</text>
</comment>
<comment type="induction">
    <text evidence="3">Induced by blue light and red:far-red light in a ratio of 1.22.</text>
</comment>
<comment type="biotechnology">
    <text evidence="4">Overexpression of UGT76G1 in Stevia leaves increases the rebaudioside A/stevioside ratio more than 5-fold without compromising plant development or changes in total steviol glycoside content (PubMed:30569490). Rebaudioside A has the advantage to be sweeter and have less bitter aftertaste than stevioside (PubMed:30569490).</text>
</comment>
<comment type="miscellaneous">
    <text evidence="8">Leaves of the 'sweet herb' Stevia rebaudiana contain a mix of steviol glycosides, compounds that are unique in the plant world because of their intense sweetness and high concentration in leaf tissue (Probable). Stevia leaves have been used as natural sweeteners in South America for centuries (Probable).</text>
</comment>
<comment type="similarity">
    <text evidence="8">Belongs to the UDP-glycosyltransferase family.</text>
</comment>
<evidence type="ECO:0000269" key="1">
    <source>
    </source>
</evidence>
<evidence type="ECO:0000269" key="2">
    <source>
    </source>
</evidence>
<evidence type="ECO:0000269" key="3">
    <source>
    </source>
</evidence>
<evidence type="ECO:0000269" key="4">
    <source>
    </source>
</evidence>
<evidence type="ECO:0000269" key="5">
    <source>
    </source>
</evidence>
<evidence type="ECO:0000269" key="6">
    <source>
    </source>
</evidence>
<evidence type="ECO:0000303" key="7">
    <source>
    </source>
</evidence>
<evidence type="ECO:0000305" key="8"/>
<evidence type="ECO:0007744" key="9">
    <source>
        <dbReference type="PDB" id="6INF"/>
    </source>
</evidence>
<evidence type="ECO:0007744" key="10">
    <source>
        <dbReference type="PDB" id="6INH"/>
    </source>
</evidence>
<evidence type="ECO:0007744" key="11">
    <source>
        <dbReference type="PDB" id="6INI"/>
    </source>
</evidence>
<evidence type="ECO:0007744" key="12">
    <source>
        <dbReference type="PDB" id="6KVL"/>
    </source>
</evidence>
<evidence type="ECO:0007744" key="13">
    <source>
        <dbReference type="PDB" id="6O86"/>
    </source>
</evidence>
<evidence type="ECO:0007744" key="14">
    <source>
        <dbReference type="PDB" id="6O88"/>
    </source>
</evidence>
<evidence type="ECO:0007829" key="15">
    <source>
        <dbReference type="PDB" id="6INF"/>
    </source>
</evidence>
<evidence type="ECO:0007829" key="16">
    <source>
        <dbReference type="PDB" id="6ING"/>
    </source>
</evidence>
<evidence type="ECO:0007829" key="17">
    <source>
        <dbReference type="PDB" id="6INI"/>
    </source>
</evidence>
<evidence type="ECO:0007829" key="18">
    <source>
        <dbReference type="PDB" id="6KVK"/>
    </source>
</evidence>
<evidence type="ECO:0007829" key="19">
    <source>
        <dbReference type="PDB" id="6O87"/>
    </source>
</evidence>
<dbReference type="EC" id="2.4.1.-" evidence="1 5 6"/>
<dbReference type="EMBL" id="AY345974">
    <property type="protein sequence ID" value="AAR06912.1"/>
    <property type="molecule type" value="mRNA"/>
</dbReference>
<dbReference type="PDB" id="6INF">
    <property type="method" value="X-ray"/>
    <property type="resolution" value="1.69 A"/>
    <property type="chains" value="A=1-458"/>
</dbReference>
<dbReference type="PDB" id="6ING">
    <property type="method" value="X-ray"/>
    <property type="resolution" value="1.70 A"/>
    <property type="chains" value="A=1-458"/>
</dbReference>
<dbReference type="PDB" id="6INH">
    <property type="method" value="X-ray"/>
    <property type="resolution" value="2.10 A"/>
    <property type="chains" value="A=1-458"/>
</dbReference>
<dbReference type="PDB" id="6INI">
    <property type="method" value="X-ray"/>
    <property type="resolution" value="1.70 A"/>
    <property type="chains" value="A=1-458"/>
</dbReference>
<dbReference type="PDB" id="6KVI">
    <property type="method" value="X-ray"/>
    <property type="resolution" value="2.60 A"/>
    <property type="chains" value="A=1-458"/>
</dbReference>
<dbReference type="PDB" id="6KVJ">
    <property type="method" value="X-ray"/>
    <property type="resolution" value="2.50 A"/>
    <property type="chains" value="A=1-458"/>
</dbReference>
<dbReference type="PDB" id="6KVK">
    <property type="method" value="X-ray"/>
    <property type="resolution" value="2.40 A"/>
    <property type="chains" value="A=1-458"/>
</dbReference>
<dbReference type="PDB" id="6KVL">
    <property type="method" value="X-ray"/>
    <property type="resolution" value="2.00 A"/>
    <property type="chains" value="A=1-458"/>
</dbReference>
<dbReference type="PDB" id="6O86">
    <property type="method" value="X-ray"/>
    <property type="resolution" value="1.80 A"/>
    <property type="chains" value="A=1-458"/>
</dbReference>
<dbReference type="PDB" id="6O87">
    <property type="method" value="X-ray"/>
    <property type="resolution" value="1.75 A"/>
    <property type="chains" value="A=1-458"/>
</dbReference>
<dbReference type="PDB" id="6O88">
    <property type="method" value="X-ray"/>
    <property type="resolution" value="1.99 A"/>
    <property type="chains" value="A=1-458"/>
</dbReference>
<dbReference type="PDBsum" id="6INF"/>
<dbReference type="PDBsum" id="6ING"/>
<dbReference type="PDBsum" id="6INH"/>
<dbReference type="PDBsum" id="6INI"/>
<dbReference type="PDBsum" id="6KVI"/>
<dbReference type="PDBsum" id="6KVJ"/>
<dbReference type="PDBsum" id="6KVK"/>
<dbReference type="PDBsum" id="6KVL"/>
<dbReference type="PDBsum" id="6O86"/>
<dbReference type="PDBsum" id="6O87"/>
<dbReference type="PDBsum" id="6O88"/>
<dbReference type="SMR" id="Q6VAB4"/>
<dbReference type="CAZy" id="GT1">
    <property type="family name" value="Glycosyltransferase Family 1"/>
</dbReference>
<dbReference type="BioCyc" id="MetaCyc:MONOMER-17485"/>
<dbReference type="SABIO-RK" id="Q6VAB4"/>
<dbReference type="GO" id="GO:0080043">
    <property type="term" value="F:quercetin 3-O-glucosyltransferase activity"/>
    <property type="evidence" value="ECO:0007669"/>
    <property type="project" value="TreeGrafter"/>
</dbReference>
<dbReference type="GO" id="GO:0080044">
    <property type="term" value="F:quercetin 7-O-glucosyltransferase activity"/>
    <property type="evidence" value="ECO:0007669"/>
    <property type="project" value="TreeGrafter"/>
</dbReference>
<dbReference type="GO" id="GO:0102380">
    <property type="term" value="F:steviolbioside glucosyltransferase activity (rebaudioside B forming)"/>
    <property type="evidence" value="ECO:0007669"/>
    <property type="project" value="RHEA"/>
</dbReference>
<dbReference type="GO" id="GO:0102381">
    <property type="term" value="F:stevioside glucosyltransferase activity (rebaudioside A forming)"/>
    <property type="evidence" value="ECO:0007669"/>
    <property type="project" value="RHEA"/>
</dbReference>
<dbReference type="GO" id="GO:0035251">
    <property type="term" value="F:UDP-glucosyltransferase activity"/>
    <property type="evidence" value="ECO:0000314"/>
    <property type="project" value="UniProtKB"/>
</dbReference>
<dbReference type="CDD" id="cd03784">
    <property type="entry name" value="GT1_Gtf-like"/>
    <property type="match status" value="1"/>
</dbReference>
<dbReference type="FunFam" id="3.40.50.2000:FF:000040">
    <property type="entry name" value="UDP-glycosyltransferase 76C1"/>
    <property type="match status" value="1"/>
</dbReference>
<dbReference type="FunFam" id="3.40.50.2000:FF:000120">
    <property type="entry name" value="UDP-glycosyltransferase 76C1"/>
    <property type="match status" value="1"/>
</dbReference>
<dbReference type="Gene3D" id="3.40.50.2000">
    <property type="entry name" value="Glycogen Phosphorylase B"/>
    <property type="match status" value="2"/>
</dbReference>
<dbReference type="InterPro" id="IPR002213">
    <property type="entry name" value="UDP_glucos_trans"/>
</dbReference>
<dbReference type="PANTHER" id="PTHR11926">
    <property type="entry name" value="GLUCOSYL/GLUCURONOSYL TRANSFERASES"/>
    <property type="match status" value="1"/>
</dbReference>
<dbReference type="PANTHER" id="PTHR11926:SF1464">
    <property type="entry name" value="UDP-GLYCOSYLTRANSFERASE 76B1-LIKE"/>
    <property type="match status" value="1"/>
</dbReference>
<dbReference type="Pfam" id="PF00201">
    <property type="entry name" value="UDPGT"/>
    <property type="match status" value="1"/>
</dbReference>
<dbReference type="SUPFAM" id="SSF53756">
    <property type="entry name" value="UDP-Glycosyltransferase/glycogen phosphorylase"/>
    <property type="match status" value="1"/>
</dbReference>
<accession>Q6VAB4</accession>